<proteinExistence type="inferred from homology"/>
<keyword id="KW-0067">ATP-binding</keyword>
<keyword id="KW-0342">GTP-binding</keyword>
<keyword id="KW-0547">Nucleotide-binding</keyword>
<accession>Q0I3W8</accession>
<dbReference type="EMBL" id="CP000436">
    <property type="protein sequence ID" value="ABI25453.1"/>
    <property type="molecule type" value="Genomic_DNA"/>
</dbReference>
<dbReference type="SMR" id="Q0I3W8"/>
<dbReference type="KEGG" id="hso:HS_1178"/>
<dbReference type="eggNOG" id="COG1660">
    <property type="taxonomic scope" value="Bacteria"/>
</dbReference>
<dbReference type="HOGENOM" id="CLU_059558_1_1_6"/>
<dbReference type="GO" id="GO:0005524">
    <property type="term" value="F:ATP binding"/>
    <property type="evidence" value="ECO:0007669"/>
    <property type="project" value="UniProtKB-UniRule"/>
</dbReference>
<dbReference type="GO" id="GO:0005525">
    <property type="term" value="F:GTP binding"/>
    <property type="evidence" value="ECO:0007669"/>
    <property type="project" value="UniProtKB-UniRule"/>
</dbReference>
<dbReference type="Gene3D" id="3.40.50.300">
    <property type="entry name" value="P-loop containing nucleotide triphosphate hydrolases"/>
    <property type="match status" value="1"/>
</dbReference>
<dbReference type="HAMAP" id="MF_00636">
    <property type="entry name" value="RapZ_like"/>
    <property type="match status" value="1"/>
</dbReference>
<dbReference type="InterPro" id="IPR027417">
    <property type="entry name" value="P-loop_NTPase"/>
</dbReference>
<dbReference type="InterPro" id="IPR005337">
    <property type="entry name" value="RapZ-like"/>
</dbReference>
<dbReference type="InterPro" id="IPR053930">
    <property type="entry name" value="RapZ-like_N"/>
</dbReference>
<dbReference type="InterPro" id="IPR053931">
    <property type="entry name" value="RapZ_C"/>
</dbReference>
<dbReference type="NCBIfam" id="NF003828">
    <property type="entry name" value="PRK05416.1"/>
    <property type="match status" value="1"/>
</dbReference>
<dbReference type="PANTHER" id="PTHR30448">
    <property type="entry name" value="RNASE ADAPTER PROTEIN RAPZ"/>
    <property type="match status" value="1"/>
</dbReference>
<dbReference type="PANTHER" id="PTHR30448:SF0">
    <property type="entry name" value="RNASE ADAPTER PROTEIN RAPZ"/>
    <property type="match status" value="1"/>
</dbReference>
<dbReference type="Pfam" id="PF22740">
    <property type="entry name" value="PapZ_C"/>
    <property type="match status" value="1"/>
</dbReference>
<dbReference type="Pfam" id="PF03668">
    <property type="entry name" value="RapZ-like_N"/>
    <property type="match status" value="1"/>
</dbReference>
<dbReference type="PIRSF" id="PIRSF005052">
    <property type="entry name" value="P-loopkin"/>
    <property type="match status" value="1"/>
</dbReference>
<dbReference type="SUPFAM" id="SSF52540">
    <property type="entry name" value="P-loop containing nucleoside triphosphate hydrolases"/>
    <property type="match status" value="1"/>
</dbReference>
<sequence length="286" mass="33121">MEIIIISGRSGAGKSVALRALEDIGYYCVDNLTMDLVPQLVDMLENKQHLVAISLDIRNLPQEPETLDHILNLLQEKYPVKIIFLDTDRNTLIRRYSDSRRLHPLSVQNLSLEAAIAAEKEHLEPLVQHANVIIDTTPLSPHELAERLREFLRGNTEKELQIIVESFGFKYGIPLDADYVFDVRFLPNPHWNQELRPMTGLEKPVIEFMQKHIEVDNFIYQTRNYIENWLPMLEKNNRSYLTIAIGCTGGKHRSVYIAQQIGEYFRAKGKKVQIQHKSLEKHTQNK</sequence>
<name>Y1178_HISS1</name>
<reference key="1">
    <citation type="journal article" date="2007" name="J. Bacteriol.">
        <title>Complete genome sequence of Haemophilus somnus (Histophilus somni) strain 129Pt and comparison to Haemophilus ducreyi 35000HP and Haemophilus influenzae Rd.</title>
        <authorList>
            <person name="Challacombe J.F."/>
            <person name="Duncan A.J."/>
            <person name="Brettin T.S."/>
            <person name="Bruce D."/>
            <person name="Chertkov O."/>
            <person name="Detter J.C."/>
            <person name="Han C.S."/>
            <person name="Misra M."/>
            <person name="Richardson P."/>
            <person name="Tapia R."/>
            <person name="Thayer N."/>
            <person name="Xie G."/>
            <person name="Inzana T.J."/>
        </authorList>
    </citation>
    <scope>NUCLEOTIDE SEQUENCE [LARGE SCALE GENOMIC DNA]</scope>
    <source>
        <strain>129Pt</strain>
    </source>
</reference>
<gene>
    <name type="ordered locus">HS_1178</name>
</gene>
<protein>
    <recommendedName>
        <fullName evidence="1">Nucleotide-binding protein HS_1178</fullName>
    </recommendedName>
</protein>
<feature type="chain" id="PRO_1000056825" description="Nucleotide-binding protein HS_1178">
    <location>
        <begin position="1"/>
        <end position="286"/>
    </location>
</feature>
<feature type="binding site" evidence="1">
    <location>
        <begin position="8"/>
        <end position="15"/>
    </location>
    <ligand>
        <name>ATP</name>
        <dbReference type="ChEBI" id="CHEBI:30616"/>
    </ligand>
</feature>
<feature type="binding site" evidence="1">
    <location>
        <begin position="56"/>
        <end position="59"/>
    </location>
    <ligand>
        <name>GTP</name>
        <dbReference type="ChEBI" id="CHEBI:37565"/>
    </ligand>
</feature>
<organism>
    <name type="scientific">Histophilus somni (strain 129Pt)</name>
    <name type="common">Haemophilus somnus</name>
    <dbReference type="NCBI Taxonomy" id="205914"/>
    <lineage>
        <taxon>Bacteria</taxon>
        <taxon>Pseudomonadati</taxon>
        <taxon>Pseudomonadota</taxon>
        <taxon>Gammaproteobacteria</taxon>
        <taxon>Pasteurellales</taxon>
        <taxon>Pasteurellaceae</taxon>
        <taxon>Histophilus</taxon>
    </lineage>
</organism>
<evidence type="ECO:0000255" key="1">
    <source>
        <dbReference type="HAMAP-Rule" id="MF_00636"/>
    </source>
</evidence>
<comment type="function">
    <text evidence="1">Displays ATPase and GTPase activities.</text>
</comment>
<comment type="similarity">
    <text evidence="1">Belongs to the RapZ-like family.</text>
</comment>